<evidence type="ECO:0000255" key="1">
    <source>
        <dbReference type="HAMAP-Rule" id="MF_00536"/>
    </source>
</evidence>
<protein>
    <recommendedName>
        <fullName evidence="1">4-hydroxythreonine-4-phosphate dehydrogenase</fullName>
        <ecNumber evidence="1">1.1.1.262</ecNumber>
    </recommendedName>
    <alternativeName>
        <fullName evidence="1">4-(phosphohydroxy)-L-threonine dehydrogenase</fullName>
    </alternativeName>
</protein>
<sequence length="349" mass="36850">MASDDRPLALTLGDPSGIGPEIALAAWQLRGERGVPPFQLIGDPEFLEATAYRLGLSVPVAEVEPDDACEVFPRALPVLPLPSGAKVIATPGAPDSANAGAIVESITAAVDLVRSGAASAVVTNPIAKFVLTRVGFAHPGHTEFLAALAAREGREPPLPVMMIWSDTLAVVPVTIHVALRRVPELLTQDLVERTARIVHADLRARFGLEHPRLVLSGLNPHAGESGTMGTEDRDVLAPAVAVLRSEGIDIRGPLPADTLFHERARATYDVALTPTHDQALIPVKTLAFDEGVNVTLGLPFVRTSPDHGTAFDIAGKGIAKPDSLIAALRLAHRLAHRPADTVLPFPVRA</sequence>
<name>PDXA_METEP</name>
<organism>
    <name type="scientific">Methylorubrum extorquens (strain PA1)</name>
    <name type="common">Methylobacterium extorquens</name>
    <dbReference type="NCBI Taxonomy" id="419610"/>
    <lineage>
        <taxon>Bacteria</taxon>
        <taxon>Pseudomonadati</taxon>
        <taxon>Pseudomonadota</taxon>
        <taxon>Alphaproteobacteria</taxon>
        <taxon>Hyphomicrobiales</taxon>
        <taxon>Methylobacteriaceae</taxon>
        <taxon>Methylorubrum</taxon>
    </lineage>
</organism>
<gene>
    <name evidence="1" type="primary">pdxA</name>
    <name type="ordered locus">Mext_3638</name>
</gene>
<comment type="function">
    <text evidence="1">Catalyzes the NAD(P)-dependent oxidation of 4-(phosphooxy)-L-threonine (HTP) into 2-amino-3-oxo-4-(phosphooxy)butyric acid which spontaneously decarboxylates to form 3-amino-2-oxopropyl phosphate (AHAP).</text>
</comment>
<comment type="catalytic activity">
    <reaction evidence="1">
        <text>4-(phosphooxy)-L-threonine + NAD(+) = 3-amino-2-oxopropyl phosphate + CO2 + NADH</text>
        <dbReference type="Rhea" id="RHEA:32275"/>
        <dbReference type="ChEBI" id="CHEBI:16526"/>
        <dbReference type="ChEBI" id="CHEBI:57279"/>
        <dbReference type="ChEBI" id="CHEBI:57540"/>
        <dbReference type="ChEBI" id="CHEBI:57945"/>
        <dbReference type="ChEBI" id="CHEBI:58452"/>
        <dbReference type="EC" id="1.1.1.262"/>
    </reaction>
</comment>
<comment type="cofactor">
    <cofactor evidence="1">
        <name>Zn(2+)</name>
        <dbReference type="ChEBI" id="CHEBI:29105"/>
    </cofactor>
    <cofactor evidence="1">
        <name>Mg(2+)</name>
        <dbReference type="ChEBI" id="CHEBI:18420"/>
    </cofactor>
    <cofactor evidence="1">
        <name>Co(2+)</name>
        <dbReference type="ChEBI" id="CHEBI:48828"/>
    </cofactor>
    <text evidence="1">Binds 1 divalent metal cation per subunit. Can use ions such as Zn(2+), Mg(2+) or Co(2+).</text>
</comment>
<comment type="pathway">
    <text evidence="1">Cofactor biosynthesis; pyridoxine 5'-phosphate biosynthesis; pyridoxine 5'-phosphate from D-erythrose 4-phosphate: step 4/5.</text>
</comment>
<comment type="subunit">
    <text evidence="1">Homodimer.</text>
</comment>
<comment type="subcellular location">
    <subcellularLocation>
        <location evidence="1">Cytoplasm</location>
    </subcellularLocation>
</comment>
<comment type="miscellaneous">
    <text evidence="1">The active site is located at the dimer interface.</text>
</comment>
<comment type="similarity">
    <text evidence="1">Belongs to the PdxA family.</text>
</comment>
<proteinExistence type="inferred from homology"/>
<keyword id="KW-0170">Cobalt</keyword>
<keyword id="KW-0963">Cytoplasm</keyword>
<keyword id="KW-0460">Magnesium</keyword>
<keyword id="KW-0479">Metal-binding</keyword>
<keyword id="KW-0520">NAD</keyword>
<keyword id="KW-0521">NADP</keyword>
<keyword id="KW-0560">Oxidoreductase</keyword>
<keyword id="KW-0664">Pyridoxine biosynthesis</keyword>
<keyword id="KW-0862">Zinc</keyword>
<feature type="chain" id="PRO_1000128254" description="4-hydroxythreonine-4-phosphate dehydrogenase">
    <location>
        <begin position="1"/>
        <end position="349"/>
    </location>
</feature>
<feature type="binding site" evidence="1">
    <location>
        <position position="141"/>
    </location>
    <ligand>
        <name>substrate</name>
    </ligand>
</feature>
<feature type="binding site" evidence="1">
    <location>
        <position position="142"/>
    </location>
    <ligand>
        <name>substrate</name>
    </ligand>
</feature>
<feature type="binding site" evidence="1">
    <location>
        <position position="176"/>
    </location>
    <ligand>
        <name>a divalent metal cation</name>
        <dbReference type="ChEBI" id="CHEBI:60240"/>
        <note>ligand shared between dimeric partners</note>
    </ligand>
</feature>
<feature type="binding site" evidence="1">
    <location>
        <position position="221"/>
    </location>
    <ligand>
        <name>a divalent metal cation</name>
        <dbReference type="ChEBI" id="CHEBI:60240"/>
        <note>ligand shared between dimeric partners</note>
    </ligand>
</feature>
<feature type="binding site" evidence="1">
    <location>
        <position position="276"/>
    </location>
    <ligand>
        <name>a divalent metal cation</name>
        <dbReference type="ChEBI" id="CHEBI:60240"/>
        <note>ligand shared between dimeric partners</note>
    </ligand>
</feature>
<feature type="binding site" evidence="1">
    <location>
        <position position="284"/>
    </location>
    <ligand>
        <name>substrate</name>
    </ligand>
</feature>
<feature type="binding site" evidence="1">
    <location>
        <position position="293"/>
    </location>
    <ligand>
        <name>substrate</name>
    </ligand>
</feature>
<feature type="binding site" evidence="1">
    <location>
        <position position="302"/>
    </location>
    <ligand>
        <name>substrate</name>
    </ligand>
</feature>
<reference key="1">
    <citation type="submission" date="2007-12" db="EMBL/GenBank/DDBJ databases">
        <title>Complete sequence of Methylobacterium extorquens PA1.</title>
        <authorList>
            <consortium name="US DOE Joint Genome Institute"/>
            <person name="Copeland A."/>
            <person name="Lucas S."/>
            <person name="Lapidus A."/>
            <person name="Barry K."/>
            <person name="Glavina del Rio T."/>
            <person name="Dalin E."/>
            <person name="Tice H."/>
            <person name="Pitluck S."/>
            <person name="Saunders E."/>
            <person name="Brettin T."/>
            <person name="Bruce D."/>
            <person name="Detter J.C."/>
            <person name="Han C."/>
            <person name="Schmutz J."/>
            <person name="Larimer F."/>
            <person name="Land M."/>
            <person name="Hauser L."/>
            <person name="Kyrpides N."/>
            <person name="Kim E."/>
            <person name="Marx C."/>
            <person name="Richardson P."/>
        </authorList>
    </citation>
    <scope>NUCLEOTIDE SEQUENCE [LARGE SCALE GENOMIC DNA]</scope>
    <source>
        <strain>PA1</strain>
    </source>
</reference>
<accession>A9VXC3</accession>
<dbReference type="EC" id="1.1.1.262" evidence="1"/>
<dbReference type="EMBL" id="CP000908">
    <property type="protein sequence ID" value="ABY32016.1"/>
    <property type="molecule type" value="Genomic_DNA"/>
</dbReference>
<dbReference type="RefSeq" id="WP_012254856.1">
    <property type="nucleotide sequence ID" value="NC_010172.1"/>
</dbReference>
<dbReference type="SMR" id="A9VXC3"/>
<dbReference type="KEGG" id="mex:Mext_3638"/>
<dbReference type="eggNOG" id="COG1995">
    <property type="taxonomic scope" value="Bacteria"/>
</dbReference>
<dbReference type="HOGENOM" id="CLU_040168_1_0_5"/>
<dbReference type="BioCyc" id="MEXT419610:MEXT_RS18235-MONOMER"/>
<dbReference type="UniPathway" id="UPA00244">
    <property type="reaction ID" value="UER00312"/>
</dbReference>
<dbReference type="GO" id="GO:0005737">
    <property type="term" value="C:cytoplasm"/>
    <property type="evidence" value="ECO:0007669"/>
    <property type="project" value="UniProtKB-SubCell"/>
</dbReference>
<dbReference type="GO" id="GO:0050570">
    <property type="term" value="F:4-hydroxythreonine-4-phosphate dehydrogenase activity"/>
    <property type="evidence" value="ECO:0007669"/>
    <property type="project" value="UniProtKB-UniRule"/>
</dbReference>
<dbReference type="GO" id="GO:0050897">
    <property type="term" value="F:cobalt ion binding"/>
    <property type="evidence" value="ECO:0007669"/>
    <property type="project" value="UniProtKB-UniRule"/>
</dbReference>
<dbReference type="GO" id="GO:0000287">
    <property type="term" value="F:magnesium ion binding"/>
    <property type="evidence" value="ECO:0007669"/>
    <property type="project" value="UniProtKB-UniRule"/>
</dbReference>
<dbReference type="GO" id="GO:0051287">
    <property type="term" value="F:NAD binding"/>
    <property type="evidence" value="ECO:0007669"/>
    <property type="project" value="InterPro"/>
</dbReference>
<dbReference type="GO" id="GO:0008270">
    <property type="term" value="F:zinc ion binding"/>
    <property type="evidence" value="ECO:0007669"/>
    <property type="project" value="UniProtKB-UniRule"/>
</dbReference>
<dbReference type="GO" id="GO:0042823">
    <property type="term" value="P:pyridoxal phosphate biosynthetic process"/>
    <property type="evidence" value="ECO:0007669"/>
    <property type="project" value="UniProtKB-UniRule"/>
</dbReference>
<dbReference type="GO" id="GO:0008615">
    <property type="term" value="P:pyridoxine biosynthetic process"/>
    <property type="evidence" value="ECO:0007669"/>
    <property type="project" value="UniProtKB-UniRule"/>
</dbReference>
<dbReference type="Gene3D" id="3.40.718.10">
    <property type="entry name" value="Isopropylmalate Dehydrogenase"/>
    <property type="match status" value="1"/>
</dbReference>
<dbReference type="HAMAP" id="MF_00536">
    <property type="entry name" value="PdxA"/>
    <property type="match status" value="1"/>
</dbReference>
<dbReference type="InterPro" id="IPR037510">
    <property type="entry name" value="PdxA"/>
</dbReference>
<dbReference type="InterPro" id="IPR005255">
    <property type="entry name" value="PdxA_fam"/>
</dbReference>
<dbReference type="NCBIfam" id="TIGR00557">
    <property type="entry name" value="pdxA"/>
    <property type="match status" value="1"/>
</dbReference>
<dbReference type="NCBIfam" id="NF003699">
    <property type="entry name" value="PRK05312.1"/>
    <property type="match status" value="1"/>
</dbReference>
<dbReference type="PANTHER" id="PTHR30004">
    <property type="entry name" value="4-HYDROXYTHREONINE-4-PHOSPHATE DEHYDROGENASE"/>
    <property type="match status" value="1"/>
</dbReference>
<dbReference type="PANTHER" id="PTHR30004:SF6">
    <property type="entry name" value="D-THREONATE 4-PHOSPHATE DEHYDROGENASE"/>
    <property type="match status" value="1"/>
</dbReference>
<dbReference type="Pfam" id="PF04166">
    <property type="entry name" value="PdxA"/>
    <property type="match status" value="1"/>
</dbReference>
<dbReference type="SUPFAM" id="SSF53659">
    <property type="entry name" value="Isocitrate/Isopropylmalate dehydrogenase-like"/>
    <property type="match status" value="1"/>
</dbReference>